<accession>B4TCS4</accession>
<dbReference type="EC" id="2.7.7.6" evidence="1"/>
<dbReference type="EMBL" id="CP001120">
    <property type="protein sequence ID" value="ACF69061.1"/>
    <property type="molecule type" value="Genomic_DNA"/>
</dbReference>
<dbReference type="RefSeq" id="WP_000263105.1">
    <property type="nucleotide sequence ID" value="NC_011083.1"/>
</dbReference>
<dbReference type="SMR" id="B4TCS4"/>
<dbReference type="KEGG" id="seh:SeHA_C4483"/>
<dbReference type="HOGENOM" id="CLU_000524_4_0_6"/>
<dbReference type="Proteomes" id="UP000001866">
    <property type="component" value="Chromosome"/>
</dbReference>
<dbReference type="GO" id="GO:0000428">
    <property type="term" value="C:DNA-directed RNA polymerase complex"/>
    <property type="evidence" value="ECO:0007669"/>
    <property type="project" value="UniProtKB-KW"/>
</dbReference>
<dbReference type="GO" id="GO:0003677">
    <property type="term" value="F:DNA binding"/>
    <property type="evidence" value="ECO:0007669"/>
    <property type="project" value="UniProtKB-UniRule"/>
</dbReference>
<dbReference type="GO" id="GO:0003899">
    <property type="term" value="F:DNA-directed RNA polymerase activity"/>
    <property type="evidence" value="ECO:0007669"/>
    <property type="project" value="UniProtKB-UniRule"/>
</dbReference>
<dbReference type="GO" id="GO:0032549">
    <property type="term" value="F:ribonucleoside binding"/>
    <property type="evidence" value="ECO:0007669"/>
    <property type="project" value="InterPro"/>
</dbReference>
<dbReference type="GO" id="GO:0006351">
    <property type="term" value="P:DNA-templated transcription"/>
    <property type="evidence" value="ECO:0007669"/>
    <property type="project" value="UniProtKB-UniRule"/>
</dbReference>
<dbReference type="CDD" id="cd00653">
    <property type="entry name" value="RNA_pol_B_RPB2"/>
    <property type="match status" value="1"/>
</dbReference>
<dbReference type="FunFam" id="2.30.150.10:FF:000001">
    <property type="entry name" value="DNA-directed RNA polymerase subunit beta"/>
    <property type="match status" value="1"/>
</dbReference>
<dbReference type="FunFam" id="2.40.270.10:FF:000003">
    <property type="entry name" value="DNA-directed RNA polymerase subunit beta"/>
    <property type="match status" value="1"/>
</dbReference>
<dbReference type="FunFam" id="2.40.270.10:FF:000004">
    <property type="entry name" value="DNA-directed RNA polymerase subunit beta"/>
    <property type="match status" value="1"/>
</dbReference>
<dbReference type="FunFam" id="2.40.50.100:FF:000006">
    <property type="entry name" value="DNA-directed RNA polymerase subunit beta"/>
    <property type="match status" value="1"/>
</dbReference>
<dbReference type="FunFam" id="2.40.50.150:FF:000001">
    <property type="entry name" value="DNA-directed RNA polymerase subunit beta"/>
    <property type="match status" value="1"/>
</dbReference>
<dbReference type="FunFam" id="3.90.1100.10:FF:000002">
    <property type="entry name" value="DNA-directed RNA polymerase subunit beta"/>
    <property type="match status" value="1"/>
</dbReference>
<dbReference type="FunFam" id="3.90.1110.10:FF:000001">
    <property type="entry name" value="DNA-directed RNA polymerase subunit beta"/>
    <property type="match status" value="1"/>
</dbReference>
<dbReference type="FunFam" id="3.90.1110.10:FF:000004">
    <property type="entry name" value="DNA-directed RNA polymerase subunit beta"/>
    <property type="match status" value="1"/>
</dbReference>
<dbReference type="FunFam" id="3.90.1800.10:FF:000001">
    <property type="entry name" value="DNA-directed RNA polymerase subunit beta"/>
    <property type="match status" value="1"/>
</dbReference>
<dbReference type="Gene3D" id="2.40.50.100">
    <property type="match status" value="1"/>
</dbReference>
<dbReference type="Gene3D" id="2.40.50.150">
    <property type="match status" value="1"/>
</dbReference>
<dbReference type="Gene3D" id="3.90.1100.10">
    <property type="match status" value="2"/>
</dbReference>
<dbReference type="Gene3D" id="6.10.140.1670">
    <property type="match status" value="1"/>
</dbReference>
<dbReference type="Gene3D" id="2.30.150.10">
    <property type="entry name" value="DNA-directed RNA polymerase, beta subunit, external 1 domain"/>
    <property type="match status" value="1"/>
</dbReference>
<dbReference type="Gene3D" id="2.40.270.10">
    <property type="entry name" value="DNA-directed RNA polymerase, subunit 2, domain 6"/>
    <property type="match status" value="1"/>
</dbReference>
<dbReference type="Gene3D" id="3.90.1800.10">
    <property type="entry name" value="RNA polymerase alpha subunit dimerisation domain"/>
    <property type="match status" value="1"/>
</dbReference>
<dbReference type="Gene3D" id="3.90.1110.10">
    <property type="entry name" value="RNA polymerase Rpb2, domain 2"/>
    <property type="match status" value="1"/>
</dbReference>
<dbReference type="HAMAP" id="MF_01321">
    <property type="entry name" value="RNApol_bact_RpoB"/>
    <property type="match status" value="1"/>
</dbReference>
<dbReference type="InterPro" id="IPR042107">
    <property type="entry name" value="DNA-dir_RNA_pol_bsu_ext_1_sf"/>
</dbReference>
<dbReference type="InterPro" id="IPR019462">
    <property type="entry name" value="DNA-dir_RNA_pol_bsu_external_1"/>
</dbReference>
<dbReference type="InterPro" id="IPR015712">
    <property type="entry name" value="DNA-dir_RNA_pol_su2"/>
</dbReference>
<dbReference type="InterPro" id="IPR007120">
    <property type="entry name" value="DNA-dir_RNAP_su2_dom"/>
</dbReference>
<dbReference type="InterPro" id="IPR037033">
    <property type="entry name" value="DNA-dir_RNAP_su2_hyb_sf"/>
</dbReference>
<dbReference type="InterPro" id="IPR010243">
    <property type="entry name" value="RNA_pol_bsu_bac"/>
</dbReference>
<dbReference type="InterPro" id="IPR007121">
    <property type="entry name" value="RNA_pol_bsu_CS"/>
</dbReference>
<dbReference type="InterPro" id="IPR007644">
    <property type="entry name" value="RNA_pol_bsu_protrusion"/>
</dbReference>
<dbReference type="InterPro" id="IPR007642">
    <property type="entry name" value="RNA_pol_Rpb2_2"/>
</dbReference>
<dbReference type="InterPro" id="IPR037034">
    <property type="entry name" value="RNA_pol_Rpb2_2_sf"/>
</dbReference>
<dbReference type="InterPro" id="IPR007645">
    <property type="entry name" value="RNA_pol_Rpb2_3"/>
</dbReference>
<dbReference type="InterPro" id="IPR007641">
    <property type="entry name" value="RNA_pol_Rpb2_7"/>
</dbReference>
<dbReference type="InterPro" id="IPR014724">
    <property type="entry name" value="RNA_pol_RPB2_OB-fold"/>
</dbReference>
<dbReference type="NCBIfam" id="NF001616">
    <property type="entry name" value="PRK00405.1"/>
    <property type="match status" value="1"/>
</dbReference>
<dbReference type="NCBIfam" id="TIGR02013">
    <property type="entry name" value="rpoB"/>
    <property type="match status" value="1"/>
</dbReference>
<dbReference type="PANTHER" id="PTHR20856">
    <property type="entry name" value="DNA-DIRECTED RNA POLYMERASE I SUBUNIT 2"/>
    <property type="match status" value="1"/>
</dbReference>
<dbReference type="Pfam" id="PF04563">
    <property type="entry name" value="RNA_pol_Rpb2_1"/>
    <property type="match status" value="1"/>
</dbReference>
<dbReference type="Pfam" id="PF04561">
    <property type="entry name" value="RNA_pol_Rpb2_2"/>
    <property type="match status" value="2"/>
</dbReference>
<dbReference type="Pfam" id="PF04565">
    <property type="entry name" value="RNA_pol_Rpb2_3"/>
    <property type="match status" value="1"/>
</dbReference>
<dbReference type="Pfam" id="PF10385">
    <property type="entry name" value="RNA_pol_Rpb2_45"/>
    <property type="match status" value="1"/>
</dbReference>
<dbReference type="Pfam" id="PF00562">
    <property type="entry name" value="RNA_pol_Rpb2_6"/>
    <property type="match status" value="1"/>
</dbReference>
<dbReference type="Pfam" id="PF04560">
    <property type="entry name" value="RNA_pol_Rpb2_7"/>
    <property type="match status" value="1"/>
</dbReference>
<dbReference type="SUPFAM" id="SSF64484">
    <property type="entry name" value="beta and beta-prime subunits of DNA dependent RNA-polymerase"/>
    <property type="match status" value="1"/>
</dbReference>
<dbReference type="PROSITE" id="PS01166">
    <property type="entry name" value="RNA_POL_BETA"/>
    <property type="match status" value="1"/>
</dbReference>
<sequence length="1342" mass="150571">MVYSYTEKKRIRKDFGKRPQVLDVPYLLSIQLDSFQKFIEQDPEGQYGLEAAFRSVFPIQSYSGNSELQYVSYRLGEPVFDVQECQIRGVTYSAPLRVKLRLVIYEREAPEGTVKDIKEQEVYMGEIPLMTDNGTFVINGTERVIVSQLHRSPGVFFDSDKGKTHSSGKVLYNARIIPYRGSWLDFEFDPKDNLFVRIDRRRKLPATIILRALNYTTEQILDLFFEKVVFEIRDNKLQMELIPERLRGETASFDIEANGKVYVEKGRRITARHIRQLEKDDIKHIEVPVEYIAGKVVSKDYVDESTGELICAANMELSLDLLAKLSQSGHKRIETLFTNDLDHGPYISETVRVDPTNDRLSALVEIYRMMRPGEPPTREAAESLFENLFFSEDRYDLSAVGRMKFNRSLLRDEIEGSGILSKDDIIDVMKKLIDIRNGKGEVDDIDHLGNRRIRSVGEMAENQFRVGLVRVERAVKERLSLGDLDTLMPQDMINAKPISAAVKEFFGSSQLSQFMDQNNPLSEITHKRRISALGPGGLTRERAGFEVRDVHPTHYGRVCPIETPEGPNIGLINSLSVYAQTNEYGFLETPYRRVVDGVVTDEIHYLSAIEEGNYVIAQANSNLDDEGHFVEDLVTCRSKGESSLFSRDQVDYMDVSTQQVVSVGASLIPFLEHDDANRALMGANMQRQAVPTLRADKPLVGTGMERAVAVDSGVTAVAKRGGTVQYVDASRIVIKVNEDEMYPGEAGIDIYNLTKYTRSNQNTCINQMPCVSLGEPVERGDVLADGPSTDLGELALGQNMRVAFMPWNGYNFEDSILVSERVVQEDRFTTIHIQELACVSRDTKLGPEEITADIPNVGEAALSKLDESGIVYIGAEVTGGDILVGKVTPKGETQLTPEEKLLRAIFGEKASDVKDSSLRVPNGVSGTVIDVQVFTRDGVEKDKRALEIEEMQLKQAKKDLSEELQILEAGLFSRIRAVLVSGGVEAEKLDKLPRDRWLELGLTDEEKQNQLEQLAEQYDELKHEFEKKLEAKRRKITQGDDLAPGVLKIVKVYLAVKRRIQPGDKMAGRHGNKGVISKINPIEDMPYDENGTPVDIVLNPLGVPSRMNIGQILETHLGMAAKGIGDKINAMLKQQQEVAKLREFIQRAYDLGADVRQKVDLSTFSDDEVLRLAENLRKGMPIATPVFDGAKEAEIKELLKLGDLPTSGQITLFDGRTGEQFERPVTVGYMYMLKLNHLVDDKMHARSTGSYSLVTQQPLGGKAQFGGQRFGEMEVWALEAYGAAYTLQEMLTVKSDDVNGRTKMYKNIVDGNHQMEPGMPESFNVLLKEIRSLGINIELEDE</sequence>
<name>RPOB_SALHS</name>
<proteinExistence type="inferred from homology"/>
<gene>
    <name evidence="1" type="primary">rpoB</name>
    <name type="ordered locus">SeHA_C4483</name>
</gene>
<evidence type="ECO:0000255" key="1">
    <source>
        <dbReference type="HAMAP-Rule" id="MF_01321"/>
    </source>
</evidence>
<keyword id="KW-0240">DNA-directed RNA polymerase</keyword>
<keyword id="KW-0548">Nucleotidyltransferase</keyword>
<keyword id="KW-0804">Transcription</keyword>
<keyword id="KW-0808">Transferase</keyword>
<organism>
    <name type="scientific">Salmonella heidelberg (strain SL476)</name>
    <dbReference type="NCBI Taxonomy" id="454169"/>
    <lineage>
        <taxon>Bacteria</taxon>
        <taxon>Pseudomonadati</taxon>
        <taxon>Pseudomonadota</taxon>
        <taxon>Gammaproteobacteria</taxon>
        <taxon>Enterobacterales</taxon>
        <taxon>Enterobacteriaceae</taxon>
        <taxon>Salmonella</taxon>
    </lineage>
</organism>
<feature type="chain" id="PRO_1000141733" description="DNA-directed RNA polymerase subunit beta">
    <location>
        <begin position="1"/>
        <end position="1342"/>
    </location>
</feature>
<comment type="function">
    <text evidence="1">DNA-dependent RNA polymerase catalyzes the transcription of DNA into RNA using the four ribonucleoside triphosphates as substrates.</text>
</comment>
<comment type="catalytic activity">
    <reaction evidence="1">
        <text>RNA(n) + a ribonucleoside 5'-triphosphate = RNA(n+1) + diphosphate</text>
        <dbReference type="Rhea" id="RHEA:21248"/>
        <dbReference type="Rhea" id="RHEA-COMP:14527"/>
        <dbReference type="Rhea" id="RHEA-COMP:17342"/>
        <dbReference type="ChEBI" id="CHEBI:33019"/>
        <dbReference type="ChEBI" id="CHEBI:61557"/>
        <dbReference type="ChEBI" id="CHEBI:140395"/>
        <dbReference type="EC" id="2.7.7.6"/>
    </reaction>
</comment>
<comment type="subunit">
    <text evidence="1">The RNAP catalytic core consists of 2 alpha, 1 beta, 1 beta' and 1 omega subunit. When a sigma factor is associated with the core the holoenzyme is formed, which can initiate transcription.</text>
</comment>
<comment type="similarity">
    <text evidence="1">Belongs to the RNA polymerase beta chain family.</text>
</comment>
<reference key="1">
    <citation type="journal article" date="2011" name="J. Bacteriol.">
        <title>Comparative genomics of 28 Salmonella enterica isolates: evidence for CRISPR-mediated adaptive sublineage evolution.</title>
        <authorList>
            <person name="Fricke W.F."/>
            <person name="Mammel M.K."/>
            <person name="McDermott P.F."/>
            <person name="Tartera C."/>
            <person name="White D.G."/>
            <person name="Leclerc J.E."/>
            <person name="Ravel J."/>
            <person name="Cebula T.A."/>
        </authorList>
    </citation>
    <scope>NUCLEOTIDE SEQUENCE [LARGE SCALE GENOMIC DNA]</scope>
    <source>
        <strain>SL476</strain>
    </source>
</reference>
<protein>
    <recommendedName>
        <fullName evidence="1">DNA-directed RNA polymerase subunit beta</fullName>
        <shortName evidence="1">RNAP subunit beta</shortName>
        <ecNumber evidence="1">2.7.7.6</ecNumber>
    </recommendedName>
    <alternativeName>
        <fullName evidence="1">RNA polymerase subunit beta</fullName>
    </alternativeName>
    <alternativeName>
        <fullName evidence="1">Transcriptase subunit beta</fullName>
    </alternativeName>
</protein>